<accession>P0ABV4</accession>
<accession>P18784</accession>
<protein>
    <recommendedName>
        <fullName>Biopolymer transport protein ExbD</fullName>
    </recommendedName>
</protein>
<dbReference type="EMBL" id="AE005174">
    <property type="protein sequence ID" value="AAG58141.1"/>
    <property type="molecule type" value="Genomic_DNA"/>
</dbReference>
<dbReference type="EMBL" id="BA000007">
    <property type="protein sequence ID" value="BAB37312.1"/>
    <property type="molecule type" value="Genomic_DNA"/>
</dbReference>
<dbReference type="PIR" id="A85960">
    <property type="entry name" value="A85960"/>
</dbReference>
<dbReference type="PIR" id="A98115">
    <property type="entry name" value="A98115"/>
</dbReference>
<dbReference type="RefSeq" id="NP_311916.1">
    <property type="nucleotide sequence ID" value="NC_002695.1"/>
</dbReference>
<dbReference type="RefSeq" id="WP_001240712.1">
    <property type="nucleotide sequence ID" value="NZ_VOAI01000009.1"/>
</dbReference>
<dbReference type="BMRB" id="P0ABV4"/>
<dbReference type="SMR" id="P0ABV4"/>
<dbReference type="STRING" id="155864.Z4358"/>
<dbReference type="GeneID" id="916285"/>
<dbReference type="GeneID" id="93778982"/>
<dbReference type="KEGG" id="ece:Z4358"/>
<dbReference type="KEGG" id="ecs:ECs_3889"/>
<dbReference type="PATRIC" id="fig|386585.9.peg.4057"/>
<dbReference type="eggNOG" id="COG0848">
    <property type="taxonomic scope" value="Bacteria"/>
</dbReference>
<dbReference type="HOGENOM" id="CLU_085305_1_3_6"/>
<dbReference type="OMA" id="PYGLVMD"/>
<dbReference type="Proteomes" id="UP000000558">
    <property type="component" value="Chromosome"/>
</dbReference>
<dbReference type="Proteomes" id="UP000002519">
    <property type="component" value="Chromosome"/>
</dbReference>
<dbReference type="GO" id="GO:0005886">
    <property type="term" value="C:plasma membrane"/>
    <property type="evidence" value="ECO:0007669"/>
    <property type="project" value="UniProtKB-SubCell"/>
</dbReference>
<dbReference type="GO" id="GO:0022857">
    <property type="term" value="F:transmembrane transporter activity"/>
    <property type="evidence" value="ECO:0007669"/>
    <property type="project" value="InterPro"/>
</dbReference>
<dbReference type="GO" id="GO:0043213">
    <property type="term" value="P:bacteriocin transport"/>
    <property type="evidence" value="ECO:0007669"/>
    <property type="project" value="UniProtKB-KW"/>
</dbReference>
<dbReference type="GO" id="GO:0015031">
    <property type="term" value="P:protein transport"/>
    <property type="evidence" value="ECO:0007669"/>
    <property type="project" value="UniProtKB-KW"/>
</dbReference>
<dbReference type="FunFam" id="3.30.420.270:FF:000002">
    <property type="entry name" value="TonB system transport protein ExbD"/>
    <property type="match status" value="1"/>
</dbReference>
<dbReference type="Gene3D" id="3.30.420.270">
    <property type="match status" value="1"/>
</dbReference>
<dbReference type="InterPro" id="IPR003400">
    <property type="entry name" value="ExbD"/>
</dbReference>
<dbReference type="InterPro" id="IPR014170">
    <property type="entry name" value="TonB_ExbD_1"/>
</dbReference>
<dbReference type="NCBIfam" id="TIGR02803">
    <property type="entry name" value="ExbD_1"/>
    <property type="match status" value="1"/>
</dbReference>
<dbReference type="NCBIfam" id="NF008429">
    <property type="entry name" value="PRK11267.1"/>
    <property type="match status" value="1"/>
</dbReference>
<dbReference type="PANTHER" id="PTHR30558:SF9">
    <property type="entry name" value="BIOPOLYMER TRANSPORT PROTEIN EXBD"/>
    <property type="match status" value="1"/>
</dbReference>
<dbReference type="PANTHER" id="PTHR30558">
    <property type="entry name" value="EXBD MEMBRANE COMPONENT OF PMF-DRIVEN MACROMOLECULE IMPORT SYSTEM"/>
    <property type="match status" value="1"/>
</dbReference>
<dbReference type="Pfam" id="PF02472">
    <property type="entry name" value="ExbD"/>
    <property type="match status" value="1"/>
</dbReference>
<comment type="function">
    <text evidence="1">Involved in the TonB-dependent energy-dependent transport of various receptor-bound substrates.</text>
</comment>
<comment type="subunit">
    <text evidence="1">The accessory proteins ExbB and ExbD seem to form a complex with TonB.</text>
</comment>
<comment type="subcellular location">
    <subcellularLocation>
        <location evidence="1">Cell inner membrane</location>
        <topology evidence="1">Single-pass type II membrane protein</topology>
    </subcellularLocation>
</comment>
<comment type="similarity">
    <text evidence="2">Belongs to the ExbD/TolR family.</text>
</comment>
<keyword id="KW-0080">Bacteriocin transport</keyword>
<keyword id="KW-0997">Cell inner membrane</keyword>
<keyword id="KW-1003">Cell membrane</keyword>
<keyword id="KW-0472">Membrane</keyword>
<keyword id="KW-0653">Protein transport</keyword>
<keyword id="KW-1185">Reference proteome</keyword>
<keyword id="KW-0735">Signal-anchor</keyword>
<keyword id="KW-0812">Transmembrane</keyword>
<keyword id="KW-1133">Transmembrane helix</keyword>
<keyword id="KW-0813">Transport</keyword>
<gene>
    <name type="primary">exbD</name>
    <name type="ordered locus">Z4358</name>
    <name type="ordered locus">ECs3889</name>
</gene>
<name>EXBD_ECO57</name>
<evidence type="ECO:0000250" key="1"/>
<evidence type="ECO:0000305" key="2"/>
<proteinExistence type="inferred from homology"/>
<feature type="chain" id="PRO_0000129118" description="Biopolymer transport protein ExbD">
    <location>
        <begin position="1"/>
        <end position="141"/>
    </location>
</feature>
<feature type="topological domain" description="Cytoplasmic" evidence="2">
    <location>
        <begin position="1"/>
        <end position="22"/>
    </location>
</feature>
<feature type="transmembrane region" description="Helical; Signal-anchor for type II membrane protein" evidence="2">
    <location>
        <begin position="23"/>
        <end position="43"/>
    </location>
</feature>
<feature type="topological domain" description="Periplasmic" evidence="2">
    <location>
        <begin position="44"/>
        <end position="141"/>
    </location>
</feature>
<reference key="1">
    <citation type="journal article" date="2001" name="Nature">
        <title>Genome sequence of enterohaemorrhagic Escherichia coli O157:H7.</title>
        <authorList>
            <person name="Perna N.T."/>
            <person name="Plunkett G. III"/>
            <person name="Burland V."/>
            <person name="Mau B."/>
            <person name="Glasner J.D."/>
            <person name="Rose D.J."/>
            <person name="Mayhew G.F."/>
            <person name="Evans P.S."/>
            <person name="Gregor J."/>
            <person name="Kirkpatrick H.A."/>
            <person name="Posfai G."/>
            <person name="Hackett J."/>
            <person name="Klink S."/>
            <person name="Boutin A."/>
            <person name="Shao Y."/>
            <person name="Miller L."/>
            <person name="Grotbeck E.J."/>
            <person name="Davis N.W."/>
            <person name="Lim A."/>
            <person name="Dimalanta E.T."/>
            <person name="Potamousis K."/>
            <person name="Apodaca J."/>
            <person name="Anantharaman T.S."/>
            <person name="Lin J."/>
            <person name="Yen G."/>
            <person name="Schwartz D.C."/>
            <person name="Welch R.A."/>
            <person name="Blattner F.R."/>
        </authorList>
    </citation>
    <scope>NUCLEOTIDE SEQUENCE [LARGE SCALE GENOMIC DNA]</scope>
    <source>
        <strain>O157:H7 / EDL933 / ATCC 700927 / EHEC</strain>
    </source>
</reference>
<reference key="2">
    <citation type="journal article" date="2001" name="DNA Res.">
        <title>Complete genome sequence of enterohemorrhagic Escherichia coli O157:H7 and genomic comparison with a laboratory strain K-12.</title>
        <authorList>
            <person name="Hayashi T."/>
            <person name="Makino K."/>
            <person name="Ohnishi M."/>
            <person name="Kurokawa K."/>
            <person name="Ishii K."/>
            <person name="Yokoyama K."/>
            <person name="Han C.-G."/>
            <person name="Ohtsubo E."/>
            <person name="Nakayama K."/>
            <person name="Murata T."/>
            <person name="Tanaka M."/>
            <person name="Tobe T."/>
            <person name="Iida T."/>
            <person name="Takami H."/>
            <person name="Honda T."/>
            <person name="Sasakawa C."/>
            <person name="Ogasawara N."/>
            <person name="Yasunaga T."/>
            <person name="Kuhara S."/>
            <person name="Shiba T."/>
            <person name="Hattori M."/>
            <person name="Shinagawa H."/>
        </authorList>
    </citation>
    <scope>NUCLEOTIDE SEQUENCE [LARGE SCALE GENOMIC DNA]</scope>
    <source>
        <strain>O157:H7 / Sakai / RIMD 0509952 / EHEC</strain>
    </source>
</reference>
<organism>
    <name type="scientific">Escherichia coli O157:H7</name>
    <dbReference type="NCBI Taxonomy" id="83334"/>
    <lineage>
        <taxon>Bacteria</taxon>
        <taxon>Pseudomonadati</taxon>
        <taxon>Pseudomonadota</taxon>
        <taxon>Gammaproteobacteria</taxon>
        <taxon>Enterobacterales</taxon>
        <taxon>Enterobacteriaceae</taxon>
        <taxon>Escherichia</taxon>
    </lineage>
</organism>
<sequence>MAMHLNENLDDNGEMHDINVTPFIDVMLVLLIIFMVAAPLATVDVKVNLPASTSTPQPRPEKPVYLSVKADNSMFIGNDPVTDETMITALNALTEGKKDTTIFFRADKTVDYETLMKVMDTLHQAGYLKIGLVGEETAKAK</sequence>